<evidence type="ECO:0000269" key="1">
    <source>
    </source>
</evidence>
<evidence type="ECO:0000269" key="2">
    <source>
    </source>
</evidence>
<evidence type="ECO:0000305" key="3"/>
<protein>
    <recommendedName>
        <fullName>Mediator of RNA polymerase II transcription subunit 27</fullName>
    </recommendedName>
    <alternativeName>
        <fullName>Mediator complex subunit 27</fullName>
    </alternativeName>
    <alternativeName>
        <fullName>RNA polymerase II mediator complex protein pmc3</fullName>
    </alternativeName>
</protein>
<dbReference type="EMBL" id="CU329670">
    <property type="protein sequence ID" value="CAA97351.1"/>
    <property type="molecule type" value="Genomic_DNA"/>
</dbReference>
<dbReference type="PIR" id="T11585">
    <property type="entry name" value="T11585"/>
</dbReference>
<dbReference type="RefSeq" id="NP_594601.1">
    <property type="nucleotide sequence ID" value="NM_001020029.2"/>
</dbReference>
<dbReference type="PDB" id="5U0P">
    <property type="method" value="EM"/>
    <property type="resolution" value="4.40 A"/>
    <property type="chains" value="2=1-273"/>
</dbReference>
<dbReference type="PDB" id="5U0S">
    <property type="method" value="EM"/>
    <property type="resolution" value="7.80 A"/>
    <property type="chains" value="2=1-273"/>
</dbReference>
<dbReference type="PDBsum" id="5U0P"/>
<dbReference type="PDBsum" id="5U0S"/>
<dbReference type="EMDB" id="EMD-8479"/>
<dbReference type="EMDB" id="EMD-8480"/>
<dbReference type="SMR" id="Q10477"/>
<dbReference type="BioGRID" id="278617">
    <property type="interactions" value="32"/>
</dbReference>
<dbReference type="FunCoup" id="Q10477">
    <property type="interactions" value="23"/>
</dbReference>
<dbReference type="IntAct" id="Q10477">
    <property type="interactions" value="2"/>
</dbReference>
<dbReference type="STRING" id="284812.Q10477"/>
<dbReference type="iPTMnet" id="Q10477"/>
<dbReference type="PaxDb" id="4896-SPAC17C9.05c.1"/>
<dbReference type="EnsemblFungi" id="SPAC17C9.05c.1">
    <property type="protein sequence ID" value="SPAC17C9.05c.1:pep"/>
    <property type="gene ID" value="SPAC17C9.05c"/>
</dbReference>
<dbReference type="GeneID" id="2542141"/>
<dbReference type="KEGG" id="spo:2542141"/>
<dbReference type="PomBase" id="SPAC17C9.05c"/>
<dbReference type="VEuPathDB" id="FungiDB:SPAC17C9.05c"/>
<dbReference type="HOGENOM" id="CLU_1082430_0_0_1"/>
<dbReference type="InParanoid" id="Q10477"/>
<dbReference type="OMA" id="FHYECTL"/>
<dbReference type="PRO" id="PR:Q10477"/>
<dbReference type="Proteomes" id="UP000002485">
    <property type="component" value="Chromosome I"/>
</dbReference>
<dbReference type="GO" id="GO:0016592">
    <property type="term" value="C:mediator complex"/>
    <property type="evidence" value="ECO:0000314"/>
    <property type="project" value="PomBase"/>
</dbReference>
<dbReference type="GO" id="GO:0005634">
    <property type="term" value="C:nucleus"/>
    <property type="evidence" value="ECO:0007005"/>
    <property type="project" value="PomBase"/>
</dbReference>
<dbReference type="GO" id="GO:0003713">
    <property type="term" value="F:transcription coactivator activity"/>
    <property type="evidence" value="ECO:0000314"/>
    <property type="project" value="PomBase"/>
</dbReference>
<dbReference type="GO" id="GO:0060261">
    <property type="term" value="P:positive regulation of transcription initiation by RNA polymerase II"/>
    <property type="evidence" value="ECO:0000269"/>
    <property type="project" value="PomBase"/>
</dbReference>
<dbReference type="InterPro" id="IPR021627">
    <property type="entry name" value="Mediator_Med27"/>
</dbReference>
<dbReference type="Pfam" id="PF11571">
    <property type="entry name" value="Med27"/>
    <property type="match status" value="1"/>
</dbReference>
<comment type="function">
    <text>Component of the Mediator complex, a coactivator involved in the regulated transcription of nearly all RNA polymerase II-dependent genes. Mediator functions as a bridge to convey information from gene-specific regulatory proteins to the basal RNA polymerase II transcription machinery. Mediator is recruited to promoters by direct interactions with regulatory proteins and serves as a scaffold for the assembly of a functional preinitiation complex with RNA polymerase II and the general transcription factors.</text>
</comment>
<comment type="subunit">
    <text evidence="1 2">Component of the Mediator complex.</text>
</comment>
<comment type="subcellular location">
    <subcellularLocation>
        <location evidence="3">Nucleus</location>
    </subcellularLocation>
</comment>
<comment type="similarity">
    <text evidence="3">Belongs to the Mediator complex subunit 27 family.</text>
</comment>
<name>MED27_SCHPO</name>
<feature type="chain" id="PRO_0000096380" description="Mediator of RNA polymerase II transcription subunit 27">
    <location>
        <begin position="1"/>
        <end position="273"/>
    </location>
</feature>
<accession>Q10477</accession>
<sequence length="273" mass="31093">MSLEEQRTRDELKHKLLDLNQLHEQLAELRTICPSLLKLLHPETGTSRKFEKSAQEAIEKVNSFYTHLKSSQNVFDYAEKSLQADSSNLLPTYLYNSEDLSNDTENNETKSINGKSALDLKEPHHSELHDNDNFQNSDINIESFKGDIEASGSILTTHENKSFTLKLANELEFIFFHDTRGKFSVYCSSSKDDAITFSINRNNNFLGNLWSLMPKILDYQHLYSKPCDFCKSLISPVYLELPSVRRNANSTVKPTSKDILALHAECVPAQSDL</sequence>
<organism>
    <name type="scientific">Schizosaccharomyces pombe (strain 972 / ATCC 24843)</name>
    <name type="common">Fission yeast</name>
    <dbReference type="NCBI Taxonomy" id="284812"/>
    <lineage>
        <taxon>Eukaryota</taxon>
        <taxon>Fungi</taxon>
        <taxon>Dikarya</taxon>
        <taxon>Ascomycota</taxon>
        <taxon>Taphrinomycotina</taxon>
        <taxon>Schizosaccharomycetes</taxon>
        <taxon>Schizosaccharomycetales</taxon>
        <taxon>Schizosaccharomycetaceae</taxon>
        <taxon>Schizosaccharomyces</taxon>
    </lineage>
</organism>
<reference key="1">
    <citation type="journal article" date="2002" name="Nature">
        <title>The genome sequence of Schizosaccharomyces pombe.</title>
        <authorList>
            <person name="Wood V."/>
            <person name="Gwilliam R."/>
            <person name="Rajandream M.A."/>
            <person name="Lyne M.H."/>
            <person name="Lyne R."/>
            <person name="Stewart A."/>
            <person name="Sgouros J.G."/>
            <person name="Peat N."/>
            <person name="Hayles J."/>
            <person name="Baker S.G."/>
            <person name="Basham D."/>
            <person name="Bowman S."/>
            <person name="Brooks K."/>
            <person name="Brown D."/>
            <person name="Brown S."/>
            <person name="Chillingworth T."/>
            <person name="Churcher C.M."/>
            <person name="Collins M."/>
            <person name="Connor R."/>
            <person name="Cronin A."/>
            <person name="Davis P."/>
            <person name="Feltwell T."/>
            <person name="Fraser A."/>
            <person name="Gentles S."/>
            <person name="Goble A."/>
            <person name="Hamlin N."/>
            <person name="Harris D.E."/>
            <person name="Hidalgo J."/>
            <person name="Hodgson G."/>
            <person name="Holroyd S."/>
            <person name="Hornsby T."/>
            <person name="Howarth S."/>
            <person name="Huckle E.J."/>
            <person name="Hunt S."/>
            <person name="Jagels K."/>
            <person name="James K.D."/>
            <person name="Jones L."/>
            <person name="Jones M."/>
            <person name="Leather S."/>
            <person name="McDonald S."/>
            <person name="McLean J."/>
            <person name="Mooney P."/>
            <person name="Moule S."/>
            <person name="Mungall K.L."/>
            <person name="Murphy L.D."/>
            <person name="Niblett D."/>
            <person name="Odell C."/>
            <person name="Oliver K."/>
            <person name="O'Neil S."/>
            <person name="Pearson D."/>
            <person name="Quail M.A."/>
            <person name="Rabbinowitsch E."/>
            <person name="Rutherford K.M."/>
            <person name="Rutter S."/>
            <person name="Saunders D."/>
            <person name="Seeger K."/>
            <person name="Sharp S."/>
            <person name="Skelton J."/>
            <person name="Simmonds M.N."/>
            <person name="Squares R."/>
            <person name="Squares S."/>
            <person name="Stevens K."/>
            <person name="Taylor K."/>
            <person name="Taylor R.G."/>
            <person name="Tivey A."/>
            <person name="Walsh S.V."/>
            <person name="Warren T."/>
            <person name="Whitehead S."/>
            <person name="Woodward J.R."/>
            <person name="Volckaert G."/>
            <person name="Aert R."/>
            <person name="Robben J."/>
            <person name="Grymonprez B."/>
            <person name="Weltjens I."/>
            <person name="Vanstreels E."/>
            <person name="Rieger M."/>
            <person name="Schaefer M."/>
            <person name="Mueller-Auer S."/>
            <person name="Gabel C."/>
            <person name="Fuchs M."/>
            <person name="Duesterhoeft A."/>
            <person name="Fritzc C."/>
            <person name="Holzer E."/>
            <person name="Moestl D."/>
            <person name="Hilbert H."/>
            <person name="Borzym K."/>
            <person name="Langer I."/>
            <person name="Beck A."/>
            <person name="Lehrach H."/>
            <person name="Reinhardt R."/>
            <person name="Pohl T.M."/>
            <person name="Eger P."/>
            <person name="Zimmermann W."/>
            <person name="Wedler H."/>
            <person name="Wambutt R."/>
            <person name="Purnelle B."/>
            <person name="Goffeau A."/>
            <person name="Cadieu E."/>
            <person name="Dreano S."/>
            <person name="Gloux S."/>
            <person name="Lelaure V."/>
            <person name="Mottier S."/>
            <person name="Galibert F."/>
            <person name="Aves S.J."/>
            <person name="Xiang Z."/>
            <person name="Hunt C."/>
            <person name="Moore K."/>
            <person name="Hurst S.M."/>
            <person name="Lucas M."/>
            <person name="Rochet M."/>
            <person name="Gaillardin C."/>
            <person name="Tallada V.A."/>
            <person name="Garzon A."/>
            <person name="Thode G."/>
            <person name="Daga R.R."/>
            <person name="Cruzado L."/>
            <person name="Jimenez J."/>
            <person name="Sanchez M."/>
            <person name="del Rey F."/>
            <person name="Benito J."/>
            <person name="Dominguez A."/>
            <person name="Revuelta J.L."/>
            <person name="Moreno S."/>
            <person name="Armstrong J."/>
            <person name="Forsburg S.L."/>
            <person name="Cerutti L."/>
            <person name="Lowe T."/>
            <person name="McCombie W.R."/>
            <person name="Paulsen I."/>
            <person name="Potashkin J."/>
            <person name="Shpakovski G.V."/>
            <person name="Ussery D."/>
            <person name="Barrell B.G."/>
            <person name="Nurse P."/>
        </authorList>
    </citation>
    <scope>NUCLEOTIDE SEQUENCE [LARGE SCALE GENOMIC DNA]</scope>
    <source>
        <strain>972 / ATCC 24843</strain>
    </source>
</reference>
<reference key="2">
    <citation type="journal article" date="2000" name="J. Biol. Chem.">
        <title>Purification and characterization of RNA polymerase II holoenzyme from Schizosaccharomyces pombe.</title>
        <authorList>
            <person name="Spaehr H."/>
            <person name="Beve J."/>
            <person name="Larsson T."/>
            <person name="Bergstroem J."/>
            <person name="Karlsson K.-A."/>
            <person name="Gustafsson C.M."/>
        </authorList>
    </citation>
    <scope>IDENTIFICATION BY MASS SPECTROMETRY</scope>
    <scope>IDENTIFICATION IN THE MEDIATOR COMPLEX</scope>
    <source>
        <strain>972 / ATCC 24843</strain>
    </source>
</reference>
<reference key="3">
    <citation type="journal article" date="2001" name="Proc. Natl. Acad. Sci. U.S.A.">
        <title>Analysis of Schizosaccharomyces pombe mediator reveals a set of essential subunits conserved between yeast and metazoan cells.</title>
        <authorList>
            <person name="Spaehr H."/>
            <person name="Samuelsen C.O."/>
            <person name="Baraznenok V."/>
            <person name="Ernest I."/>
            <person name="Huylebroeck D."/>
            <person name="Remacle J.E."/>
            <person name="Samuelsson T."/>
            <person name="Kieselbach T."/>
            <person name="Holmberg S."/>
            <person name="Gustafsson C.M."/>
        </authorList>
    </citation>
    <scope>IDENTIFICATION BY MASS SPECTROMETRY</scope>
    <scope>IDENTIFICATION IN THE MEDIATOR COMPLEX</scope>
</reference>
<proteinExistence type="evidence at protein level"/>
<gene>
    <name type="primary">med27</name>
    <name type="synonym">pmc3</name>
    <name type="ORF">SPAC17C9.05c</name>
</gene>
<keyword id="KW-0002">3D-structure</keyword>
<keyword id="KW-0010">Activator</keyword>
<keyword id="KW-0539">Nucleus</keyword>
<keyword id="KW-1185">Reference proteome</keyword>
<keyword id="KW-0804">Transcription</keyword>
<keyword id="KW-0805">Transcription regulation</keyword>